<feature type="chain" id="PRO_0000081285" description="Fimbriae Z protein">
    <location>
        <begin position="1"/>
        <end position="210"/>
    </location>
</feature>
<feature type="domain" description="Response regulatory" evidence="1">
    <location>
        <begin position="5"/>
        <end position="121"/>
    </location>
</feature>
<feature type="domain" description="HTH luxR-type" evidence="2">
    <location>
        <begin position="143"/>
        <end position="208"/>
    </location>
</feature>
<feature type="DNA-binding region" description="H-T-H motif" evidence="2">
    <location>
        <begin position="167"/>
        <end position="186"/>
    </location>
</feature>
<feature type="modified residue" description="4-aspartylphosphate" evidence="1">
    <location>
        <position position="56"/>
    </location>
</feature>
<sequence>MKPTSVIIMDTHPIIRMSIEVLLQKNSELQIVLKTDDYRITIDYLRTRPVDLIIMDIDLPGTDGFTFLKRIKQIQSTVKVLFLSSKSECFYAGRAIQAGANGFVSKCNDQNDIFHAVQMILSGYTFFPSETLNYIKSNKCSTNSSTVTVLSNREVTILRYLVSGLSNKEIADKLLLSNKTVSAHKSNIYGKLGLHSIVELIDYAKLYELI</sequence>
<accession>P0AEL9</accession>
<accession>P21502</accession>
<accession>P77080</accession>
<reference key="1">
    <citation type="journal article" date="2001" name="Nature">
        <title>Genome sequence of enterohaemorrhagic Escherichia coli O157:H7.</title>
        <authorList>
            <person name="Perna N.T."/>
            <person name="Plunkett G. III"/>
            <person name="Burland V."/>
            <person name="Mau B."/>
            <person name="Glasner J.D."/>
            <person name="Rose D.J."/>
            <person name="Mayhew G.F."/>
            <person name="Evans P.S."/>
            <person name="Gregor J."/>
            <person name="Kirkpatrick H.A."/>
            <person name="Posfai G."/>
            <person name="Hackett J."/>
            <person name="Klink S."/>
            <person name="Boutin A."/>
            <person name="Shao Y."/>
            <person name="Miller L."/>
            <person name="Grotbeck E.J."/>
            <person name="Davis N.W."/>
            <person name="Lim A."/>
            <person name="Dimalanta E.T."/>
            <person name="Potamousis K."/>
            <person name="Apodaca J."/>
            <person name="Anantharaman T.S."/>
            <person name="Lin J."/>
            <person name="Yen G."/>
            <person name="Schwartz D.C."/>
            <person name="Welch R.A."/>
            <person name="Blattner F.R."/>
        </authorList>
    </citation>
    <scope>NUCLEOTIDE SEQUENCE [LARGE SCALE GENOMIC DNA]</scope>
    <source>
        <strain>O157:H7 / EDL933 / ATCC 700927 / EHEC</strain>
    </source>
</reference>
<reference key="2">
    <citation type="journal article" date="2001" name="DNA Res.">
        <title>Complete genome sequence of enterohemorrhagic Escherichia coli O157:H7 and genomic comparison with a laboratory strain K-12.</title>
        <authorList>
            <person name="Hayashi T."/>
            <person name="Makino K."/>
            <person name="Ohnishi M."/>
            <person name="Kurokawa K."/>
            <person name="Ishii K."/>
            <person name="Yokoyama K."/>
            <person name="Han C.-G."/>
            <person name="Ohtsubo E."/>
            <person name="Nakayama K."/>
            <person name="Murata T."/>
            <person name="Tanaka M."/>
            <person name="Tobe T."/>
            <person name="Iida T."/>
            <person name="Takami H."/>
            <person name="Honda T."/>
            <person name="Sasakawa C."/>
            <person name="Ogasawara N."/>
            <person name="Yasunaga T."/>
            <person name="Kuhara S."/>
            <person name="Shiba T."/>
            <person name="Hattori M."/>
            <person name="Shinagawa H."/>
        </authorList>
    </citation>
    <scope>NUCLEOTIDE SEQUENCE [LARGE SCALE GENOMIC DNA]</scope>
    <source>
        <strain>O157:H7 / Sakai / RIMD 0509952 / EHEC</strain>
    </source>
</reference>
<comment type="subcellular location">
    <subcellularLocation>
        <location evidence="3">Cytoplasm</location>
    </subcellularLocation>
</comment>
<comment type="sequence caution" evidence="3">
    <conflict type="erroneous initiation">
        <sequence resource="EMBL-CDS" id="AAG54892"/>
    </conflict>
</comment>
<evidence type="ECO:0000255" key="1">
    <source>
        <dbReference type="PROSITE-ProRule" id="PRU00169"/>
    </source>
</evidence>
<evidence type="ECO:0000255" key="2">
    <source>
        <dbReference type="PROSITE-ProRule" id="PRU00411"/>
    </source>
</evidence>
<evidence type="ECO:0000305" key="3"/>
<proteinExistence type="inferred from homology"/>
<protein>
    <recommendedName>
        <fullName>Fimbriae Z protein</fullName>
    </recommendedName>
</protein>
<keyword id="KW-0963">Cytoplasm</keyword>
<keyword id="KW-0238">DNA-binding</keyword>
<keyword id="KW-0597">Phosphoprotein</keyword>
<keyword id="KW-1185">Reference proteome</keyword>
<keyword id="KW-0804">Transcription</keyword>
<keyword id="KW-0805">Transcription regulation</keyword>
<keyword id="KW-0902">Two-component regulatory system</keyword>
<organism>
    <name type="scientific">Escherichia coli O157:H7</name>
    <dbReference type="NCBI Taxonomy" id="83334"/>
    <lineage>
        <taxon>Bacteria</taxon>
        <taxon>Pseudomonadati</taxon>
        <taxon>Pseudomonadota</taxon>
        <taxon>Gammaproteobacteria</taxon>
        <taxon>Enterobacterales</taxon>
        <taxon>Enterobacteriaceae</taxon>
        <taxon>Escherichia</taxon>
    </lineage>
</organism>
<gene>
    <name type="primary">fimZ</name>
    <name type="ordered locus">Z0693</name>
    <name type="ordered locus">ECs0597</name>
</gene>
<dbReference type="EMBL" id="AE005174">
    <property type="protein sequence ID" value="AAG54892.1"/>
    <property type="status" value="ALT_INIT"/>
    <property type="molecule type" value="Genomic_DNA"/>
</dbReference>
<dbReference type="EMBL" id="BA000007">
    <property type="protein sequence ID" value="BAB34020.1"/>
    <property type="molecule type" value="Genomic_DNA"/>
</dbReference>
<dbReference type="PIR" id="E90703">
    <property type="entry name" value="E90703"/>
</dbReference>
<dbReference type="RefSeq" id="WP_000805428.1">
    <property type="nucleotide sequence ID" value="NZ_VOAI01000030.1"/>
</dbReference>
<dbReference type="SMR" id="P0AEL9"/>
<dbReference type="STRING" id="155864.Z0693"/>
<dbReference type="KEGG" id="ece:Z0693"/>
<dbReference type="KEGG" id="ecs:ECs_0597"/>
<dbReference type="PATRIC" id="fig|386585.9.peg.704"/>
<dbReference type="eggNOG" id="COG2197">
    <property type="taxonomic scope" value="Bacteria"/>
</dbReference>
<dbReference type="HOGENOM" id="CLU_000445_90_1_6"/>
<dbReference type="OMA" id="IRQWDGA"/>
<dbReference type="Proteomes" id="UP000000558">
    <property type="component" value="Chromosome"/>
</dbReference>
<dbReference type="Proteomes" id="UP000002519">
    <property type="component" value="Chromosome"/>
</dbReference>
<dbReference type="GO" id="GO:0005737">
    <property type="term" value="C:cytoplasm"/>
    <property type="evidence" value="ECO:0007669"/>
    <property type="project" value="UniProtKB-SubCell"/>
</dbReference>
<dbReference type="GO" id="GO:0003677">
    <property type="term" value="F:DNA binding"/>
    <property type="evidence" value="ECO:0007669"/>
    <property type="project" value="UniProtKB-KW"/>
</dbReference>
<dbReference type="GO" id="GO:0000160">
    <property type="term" value="P:phosphorelay signal transduction system"/>
    <property type="evidence" value="ECO:0007669"/>
    <property type="project" value="UniProtKB-KW"/>
</dbReference>
<dbReference type="GO" id="GO:0006355">
    <property type="term" value="P:regulation of DNA-templated transcription"/>
    <property type="evidence" value="ECO:0007669"/>
    <property type="project" value="InterPro"/>
</dbReference>
<dbReference type="CDD" id="cd06170">
    <property type="entry name" value="LuxR_C_like"/>
    <property type="match status" value="1"/>
</dbReference>
<dbReference type="CDD" id="cd17535">
    <property type="entry name" value="REC_NarL-like"/>
    <property type="match status" value="1"/>
</dbReference>
<dbReference type="Gene3D" id="3.40.50.2300">
    <property type="match status" value="1"/>
</dbReference>
<dbReference type="InterPro" id="IPR011006">
    <property type="entry name" value="CheY-like_superfamily"/>
</dbReference>
<dbReference type="InterPro" id="IPR016032">
    <property type="entry name" value="Sig_transdc_resp-reg_C-effctor"/>
</dbReference>
<dbReference type="InterPro" id="IPR001789">
    <property type="entry name" value="Sig_transdc_resp-reg_receiver"/>
</dbReference>
<dbReference type="InterPro" id="IPR000792">
    <property type="entry name" value="Tscrpt_reg_LuxR_C"/>
</dbReference>
<dbReference type="InterPro" id="IPR039420">
    <property type="entry name" value="WalR-like"/>
</dbReference>
<dbReference type="NCBIfam" id="NF007403">
    <property type="entry name" value="PRK09935.1"/>
    <property type="match status" value="1"/>
</dbReference>
<dbReference type="PANTHER" id="PTHR43214:SF41">
    <property type="entry name" value="NITRATE_NITRITE RESPONSE REGULATOR PROTEIN NARP"/>
    <property type="match status" value="1"/>
</dbReference>
<dbReference type="PANTHER" id="PTHR43214">
    <property type="entry name" value="TWO-COMPONENT RESPONSE REGULATOR"/>
    <property type="match status" value="1"/>
</dbReference>
<dbReference type="Pfam" id="PF00196">
    <property type="entry name" value="GerE"/>
    <property type="match status" value="1"/>
</dbReference>
<dbReference type="Pfam" id="PF00072">
    <property type="entry name" value="Response_reg"/>
    <property type="match status" value="1"/>
</dbReference>
<dbReference type="PRINTS" id="PR00038">
    <property type="entry name" value="HTHLUXR"/>
</dbReference>
<dbReference type="SMART" id="SM00421">
    <property type="entry name" value="HTH_LUXR"/>
    <property type="match status" value="1"/>
</dbReference>
<dbReference type="SMART" id="SM00448">
    <property type="entry name" value="REC"/>
    <property type="match status" value="1"/>
</dbReference>
<dbReference type="SUPFAM" id="SSF46894">
    <property type="entry name" value="C-terminal effector domain of the bipartite response regulators"/>
    <property type="match status" value="1"/>
</dbReference>
<dbReference type="SUPFAM" id="SSF52172">
    <property type="entry name" value="CheY-like"/>
    <property type="match status" value="1"/>
</dbReference>
<dbReference type="PROSITE" id="PS00622">
    <property type="entry name" value="HTH_LUXR_1"/>
    <property type="match status" value="1"/>
</dbReference>
<dbReference type="PROSITE" id="PS50043">
    <property type="entry name" value="HTH_LUXR_2"/>
    <property type="match status" value="1"/>
</dbReference>
<dbReference type="PROSITE" id="PS50110">
    <property type="entry name" value="RESPONSE_REGULATORY"/>
    <property type="match status" value="1"/>
</dbReference>
<name>FIMZ_ECO57</name>